<keyword id="KW-0687">Ribonucleoprotein</keyword>
<keyword id="KW-0689">Ribosomal protein</keyword>
<keyword id="KW-0694">RNA-binding</keyword>
<keyword id="KW-0699">rRNA-binding</keyword>
<evidence type="ECO:0000255" key="1">
    <source>
        <dbReference type="HAMAP-Rule" id="MF_01326"/>
    </source>
</evidence>
<evidence type="ECO:0000305" key="2"/>
<gene>
    <name evidence="1" type="primary">rplX</name>
    <name type="ordered locus">Paes_2053</name>
</gene>
<name>RL24_PROA2</name>
<accession>B4S5B7</accession>
<proteinExistence type="inferred from homology"/>
<organism>
    <name type="scientific">Prosthecochloris aestuarii (strain DSM 271 / SK 413)</name>
    <dbReference type="NCBI Taxonomy" id="290512"/>
    <lineage>
        <taxon>Bacteria</taxon>
        <taxon>Pseudomonadati</taxon>
        <taxon>Chlorobiota</taxon>
        <taxon>Chlorobiia</taxon>
        <taxon>Chlorobiales</taxon>
        <taxon>Chlorobiaceae</taxon>
        <taxon>Prosthecochloris</taxon>
    </lineage>
</organism>
<feature type="chain" id="PRO_0000355712" description="Large ribosomal subunit protein uL24">
    <location>
        <begin position="1"/>
        <end position="80"/>
    </location>
</feature>
<dbReference type="EMBL" id="CP001108">
    <property type="protein sequence ID" value="ACF47063.1"/>
    <property type="molecule type" value="Genomic_DNA"/>
</dbReference>
<dbReference type="RefSeq" id="WP_012506595.1">
    <property type="nucleotide sequence ID" value="NC_011059.1"/>
</dbReference>
<dbReference type="SMR" id="B4S5B7"/>
<dbReference type="STRING" id="290512.Paes_2053"/>
<dbReference type="KEGG" id="paa:Paes_2053"/>
<dbReference type="eggNOG" id="COG0198">
    <property type="taxonomic scope" value="Bacteria"/>
</dbReference>
<dbReference type="HOGENOM" id="CLU_093315_3_0_10"/>
<dbReference type="Proteomes" id="UP000002725">
    <property type="component" value="Chromosome"/>
</dbReference>
<dbReference type="GO" id="GO:1990904">
    <property type="term" value="C:ribonucleoprotein complex"/>
    <property type="evidence" value="ECO:0007669"/>
    <property type="project" value="UniProtKB-KW"/>
</dbReference>
<dbReference type="GO" id="GO:0005840">
    <property type="term" value="C:ribosome"/>
    <property type="evidence" value="ECO:0007669"/>
    <property type="project" value="UniProtKB-KW"/>
</dbReference>
<dbReference type="GO" id="GO:0019843">
    <property type="term" value="F:rRNA binding"/>
    <property type="evidence" value="ECO:0007669"/>
    <property type="project" value="UniProtKB-UniRule"/>
</dbReference>
<dbReference type="GO" id="GO:0003735">
    <property type="term" value="F:structural constituent of ribosome"/>
    <property type="evidence" value="ECO:0007669"/>
    <property type="project" value="InterPro"/>
</dbReference>
<dbReference type="GO" id="GO:0006412">
    <property type="term" value="P:translation"/>
    <property type="evidence" value="ECO:0007669"/>
    <property type="project" value="UniProtKB-UniRule"/>
</dbReference>
<dbReference type="CDD" id="cd06089">
    <property type="entry name" value="KOW_RPL26"/>
    <property type="match status" value="1"/>
</dbReference>
<dbReference type="Gene3D" id="2.30.30.30">
    <property type="match status" value="1"/>
</dbReference>
<dbReference type="HAMAP" id="MF_01326_B">
    <property type="entry name" value="Ribosomal_uL24_B"/>
    <property type="match status" value="1"/>
</dbReference>
<dbReference type="InterPro" id="IPR005824">
    <property type="entry name" value="KOW"/>
</dbReference>
<dbReference type="InterPro" id="IPR014722">
    <property type="entry name" value="Rib_uL2_dom2"/>
</dbReference>
<dbReference type="InterPro" id="IPR003256">
    <property type="entry name" value="Ribosomal_uL24"/>
</dbReference>
<dbReference type="InterPro" id="IPR005825">
    <property type="entry name" value="Ribosomal_uL24_CS"/>
</dbReference>
<dbReference type="InterPro" id="IPR041988">
    <property type="entry name" value="Ribosomal_uL24_KOW"/>
</dbReference>
<dbReference type="InterPro" id="IPR008991">
    <property type="entry name" value="Translation_prot_SH3-like_sf"/>
</dbReference>
<dbReference type="NCBIfam" id="TIGR01079">
    <property type="entry name" value="rplX_bact"/>
    <property type="match status" value="1"/>
</dbReference>
<dbReference type="PANTHER" id="PTHR12903">
    <property type="entry name" value="MITOCHONDRIAL RIBOSOMAL PROTEIN L24"/>
    <property type="match status" value="1"/>
</dbReference>
<dbReference type="Pfam" id="PF00467">
    <property type="entry name" value="KOW"/>
    <property type="match status" value="1"/>
</dbReference>
<dbReference type="Pfam" id="PF17136">
    <property type="entry name" value="ribosomal_L24"/>
    <property type="match status" value="1"/>
</dbReference>
<dbReference type="SMART" id="SM00739">
    <property type="entry name" value="KOW"/>
    <property type="match status" value="1"/>
</dbReference>
<dbReference type="SUPFAM" id="SSF50104">
    <property type="entry name" value="Translation proteins SH3-like domain"/>
    <property type="match status" value="1"/>
</dbReference>
<dbReference type="PROSITE" id="PS01108">
    <property type="entry name" value="RIBOSOMAL_L24"/>
    <property type="match status" value="1"/>
</dbReference>
<comment type="function">
    <text evidence="1">One of two assembly initiator proteins, it binds directly to the 5'-end of the 23S rRNA, where it nucleates assembly of the 50S subunit.</text>
</comment>
<comment type="function">
    <text evidence="1">One of the proteins that surrounds the polypeptide exit tunnel on the outside of the subunit.</text>
</comment>
<comment type="subunit">
    <text evidence="1">Part of the 50S ribosomal subunit.</text>
</comment>
<comment type="similarity">
    <text evidence="1">Belongs to the universal ribosomal protein uL24 family.</text>
</comment>
<protein>
    <recommendedName>
        <fullName evidence="1">Large ribosomal subunit protein uL24</fullName>
    </recommendedName>
    <alternativeName>
        <fullName evidence="2">50S ribosomal protein L24</fullName>
    </alternativeName>
</protein>
<reference key="1">
    <citation type="submission" date="2008-06" db="EMBL/GenBank/DDBJ databases">
        <title>Complete sequence of chromosome of Prosthecochloris aestuarii DSM 271.</title>
        <authorList>
            <consortium name="US DOE Joint Genome Institute"/>
            <person name="Lucas S."/>
            <person name="Copeland A."/>
            <person name="Lapidus A."/>
            <person name="Glavina del Rio T."/>
            <person name="Dalin E."/>
            <person name="Tice H."/>
            <person name="Bruce D."/>
            <person name="Goodwin L."/>
            <person name="Pitluck S."/>
            <person name="Schmutz J."/>
            <person name="Larimer F."/>
            <person name="Land M."/>
            <person name="Hauser L."/>
            <person name="Kyrpides N."/>
            <person name="Anderson I."/>
            <person name="Liu Z."/>
            <person name="Li T."/>
            <person name="Zhao F."/>
            <person name="Overmann J."/>
            <person name="Bryant D.A."/>
            <person name="Richardson P."/>
        </authorList>
    </citation>
    <scope>NUCLEOTIDE SEQUENCE [LARGE SCALE GENOMIC DNA]</scope>
    <source>
        <strain>DSM 271 / SK 413</strain>
    </source>
</reference>
<sequence>MKTANKQTKLHVRKNDTVVVIAGNDKGKTGKVLKAYPQACRVIVEGVNIRKRHVRPSQSHPQGAIIEREFPIHASNVKKG</sequence>